<accession>G5EBH0</accession>
<accession>Q6EZG7</accession>
<accession>Q95X30</accession>
<accession>Q9U6B9</accession>
<keyword id="KW-0025">Alternative splicing</keyword>
<keyword id="KW-0106">Calcium</keyword>
<keyword id="KW-0965">Cell junction</keyword>
<keyword id="KW-0966">Cell projection</keyword>
<keyword id="KW-0175">Coiled coil</keyword>
<keyword id="KW-0378">Hydrolase</keyword>
<keyword id="KW-0442">Lipid degradation</keyword>
<keyword id="KW-0443">Lipid metabolism</keyword>
<keyword id="KW-0479">Metal-binding</keyword>
<keyword id="KW-1185">Reference proteome</keyword>
<keyword id="KW-0770">Synapse</keyword>
<keyword id="KW-0807">Transducer</keyword>
<protein>
    <recommendedName>
        <fullName>1-phosphatidylinositol 4,5-bisphosphate phosphodiesterase beta egl-8</fullName>
        <ecNumber evidence="3">3.1.4.11</ecNumber>
    </recommendedName>
    <alternativeName>
        <fullName>Egg-laying defective protein 8</fullName>
    </alternativeName>
    <alternativeName>
        <fullName>Phosphoinositide phospholipase C-beta egl-8</fullName>
    </alternativeName>
    <alternativeName>
        <fullName evidence="18 22">Phospholipase C-beta egl-8</fullName>
        <shortName evidence="3 18">PLC-beta egl-8</shortName>
    </alternativeName>
</protein>
<proteinExistence type="evidence at protein level"/>
<name>PLCB_CAEEL</name>
<feature type="chain" id="PRO_0000425864" description="1-phosphatidylinositol 4,5-bisphosphate phosphodiesterase beta egl-8">
    <location>
        <begin position="1"/>
        <end position="1431"/>
    </location>
</feature>
<feature type="domain" description="PI-PLC X-box" evidence="6">
    <location>
        <begin position="340"/>
        <end position="491"/>
    </location>
</feature>
<feature type="domain" description="PI-PLC Y-box" evidence="7">
    <location>
        <begin position="758"/>
        <end position="874"/>
    </location>
</feature>
<feature type="domain" description="C2" evidence="5">
    <location>
        <begin position="877"/>
        <end position="1002"/>
    </location>
</feature>
<feature type="region of interest" description="Disordered" evidence="8">
    <location>
        <begin position="510"/>
        <end position="601"/>
    </location>
</feature>
<feature type="region of interest" description="Disordered" evidence="8">
    <location>
        <begin position="632"/>
        <end position="692"/>
    </location>
</feature>
<feature type="region of interest" description="Disordered" evidence="8">
    <location>
        <begin position="1072"/>
        <end position="1119"/>
    </location>
</feature>
<feature type="region of interest" description="Disordered" evidence="8">
    <location>
        <begin position="1150"/>
        <end position="1176"/>
    </location>
</feature>
<feature type="region of interest" description="Disordered" evidence="8">
    <location>
        <begin position="1188"/>
        <end position="1216"/>
    </location>
</feature>
<feature type="coiled-coil region" evidence="4">
    <location>
        <begin position="1135"/>
        <end position="1166"/>
    </location>
</feature>
<feature type="coiled-coil region" evidence="4">
    <location>
        <begin position="1288"/>
        <end position="1318"/>
    </location>
</feature>
<feature type="coiled-coil region" evidence="4">
    <location>
        <begin position="1368"/>
        <end position="1402"/>
    </location>
</feature>
<feature type="compositionally biased region" description="Acidic residues" evidence="8">
    <location>
        <begin position="543"/>
        <end position="556"/>
    </location>
</feature>
<feature type="compositionally biased region" description="Low complexity" evidence="8">
    <location>
        <begin position="572"/>
        <end position="586"/>
    </location>
</feature>
<feature type="compositionally biased region" description="Low complexity" evidence="8">
    <location>
        <begin position="652"/>
        <end position="661"/>
    </location>
</feature>
<feature type="compositionally biased region" description="Low complexity" evidence="8">
    <location>
        <begin position="668"/>
        <end position="692"/>
    </location>
</feature>
<feature type="compositionally biased region" description="Polar residues" evidence="8">
    <location>
        <begin position="1074"/>
        <end position="1113"/>
    </location>
</feature>
<feature type="compositionally biased region" description="Basic and acidic residues" evidence="8">
    <location>
        <begin position="1150"/>
        <end position="1162"/>
    </location>
</feature>
<feature type="compositionally biased region" description="Basic residues" evidence="8">
    <location>
        <begin position="1191"/>
        <end position="1200"/>
    </location>
</feature>
<feature type="compositionally biased region" description="Low complexity" evidence="8">
    <location>
        <begin position="1204"/>
        <end position="1216"/>
    </location>
</feature>
<feature type="active site" evidence="2 6">
    <location>
        <position position="355"/>
    </location>
</feature>
<feature type="active site" evidence="2 6">
    <location>
        <position position="403"/>
    </location>
</feature>
<feature type="binding site" evidence="2">
    <location>
        <position position="356"/>
    </location>
    <ligand>
        <name>Ca(2+)</name>
        <dbReference type="ChEBI" id="CHEBI:29108"/>
        <label>1</label>
        <note>catalytic</note>
    </ligand>
</feature>
<feature type="binding site" evidence="2">
    <location>
        <position position="385"/>
    </location>
    <ligand>
        <name>Ca(2+)</name>
        <dbReference type="ChEBI" id="CHEBI:29108"/>
        <label>1</label>
        <note>catalytic</note>
    </ligand>
</feature>
<feature type="binding site" evidence="2">
    <location>
        <position position="387"/>
    </location>
    <ligand>
        <name>Ca(2+)</name>
        <dbReference type="ChEBI" id="CHEBI:29108"/>
        <label>1</label>
        <note>catalytic</note>
    </ligand>
</feature>
<feature type="binding site" evidence="2">
    <location>
        <position position="437"/>
    </location>
    <ligand>
        <name>Ca(2+)</name>
        <dbReference type="ChEBI" id="CHEBI:29108"/>
        <label>1</label>
        <note>catalytic</note>
    </ligand>
</feature>
<feature type="binding site" evidence="2">
    <location>
        <position position="489"/>
    </location>
    <ligand>
        <name>substrate</name>
    </ligand>
</feature>
<feature type="binding site" evidence="2">
    <location>
        <position position="491"/>
    </location>
    <ligand>
        <name>substrate</name>
    </ligand>
</feature>
<feature type="binding site" evidence="2">
    <location>
        <position position="787"/>
    </location>
    <ligand>
        <name>substrate</name>
    </ligand>
</feature>
<feature type="binding site" evidence="2">
    <location>
        <position position="814"/>
    </location>
    <ligand>
        <name>substrate</name>
    </ligand>
</feature>
<feature type="splice variant" id="VSP_053882" description="In isoform c." evidence="19">
    <location>
        <begin position="533"/>
        <end position="698"/>
    </location>
</feature>
<feature type="splice variant" id="VSP_053883" description="In isoform c." evidence="19">
    <original>PVLTKEEEERIFAEYHYTGATTNIHPLL</original>
    <variation>ETNKISNFNIVFKGFLFLLILILLSQIP</variation>
    <location>
        <begin position="731"/>
        <end position="758"/>
    </location>
</feature>
<feature type="splice variant" id="VSP_053884" description="In isoform c." evidence="19">
    <location>
        <begin position="759"/>
        <end position="1431"/>
    </location>
</feature>
<feature type="splice variant" id="VSP_053885" description="In isoform a." evidence="18">
    <location>
        <begin position="1167"/>
        <end position="1178"/>
    </location>
</feature>
<feature type="mutagenesis site" description="In n2659; egg laying and defecation defects, and sluggish locomotion. Grows in the presence of aldicarb unlike the wild-type." evidence="10">
    <original>G</original>
    <variation>D</variation>
    <location>
        <position position="45"/>
    </location>
</feature>
<feature type="sequence conflict" description="In Ref. 2; AAF01458." evidence="20" ref="2">
    <original>MKY</original>
    <variation>I</variation>
    <location>
        <begin position="147"/>
        <end position="149"/>
    </location>
</feature>
<feature type="sequence conflict" description="In Ref. 2; AAF01458." evidence="20" ref="2">
    <original>A</original>
    <variation>AA</variation>
    <location>
        <position position="638"/>
    </location>
</feature>
<organism>
    <name type="scientific">Caenorhabditis elegans</name>
    <dbReference type="NCBI Taxonomy" id="6239"/>
    <lineage>
        <taxon>Eukaryota</taxon>
        <taxon>Metazoa</taxon>
        <taxon>Ecdysozoa</taxon>
        <taxon>Nematoda</taxon>
        <taxon>Chromadorea</taxon>
        <taxon>Rhabditida</taxon>
        <taxon>Rhabditina</taxon>
        <taxon>Rhabditomorpha</taxon>
        <taxon>Rhabditoidea</taxon>
        <taxon>Rhabditidae</taxon>
        <taxon>Peloderinae</taxon>
        <taxon>Caenorhabditis</taxon>
    </lineage>
</organism>
<evidence type="ECO:0000250" key="1">
    <source>
        <dbReference type="UniProtKB" id="P10687"/>
    </source>
</evidence>
<evidence type="ECO:0000250" key="2">
    <source>
        <dbReference type="UniProtKB" id="P10688"/>
    </source>
</evidence>
<evidence type="ECO:0000250" key="3">
    <source>
        <dbReference type="UniProtKB" id="Q9QW07"/>
    </source>
</evidence>
<evidence type="ECO:0000255" key="4"/>
<evidence type="ECO:0000255" key="5">
    <source>
        <dbReference type="PROSITE-ProRule" id="PRU00041"/>
    </source>
</evidence>
<evidence type="ECO:0000255" key="6">
    <source>
        <dbReference type="PROSITE-ProRule" id="PRU00270"/>
    </source>
</evidence>
<evidence type="ECO:0000255" key="7">
    <source>
        <dbReference type="PROSITE-ProRule" id="PRU00271"/>
    </source>
</evidence>
<evidence type="ECO:0000256" key="8">
    <source>
        <dbReference type="SAM" id="MobiDB-lite"/>
    </source>
</evidence>
<evidence type="ECO:0000269" key="9">
    <source>
    </source>
</evidence>
<evidence type="ECO:0000269" key="10">
    <source>
    </source>
</evidence>
<evidence type="ECO:0000269" key="11">
    <source>
    </source>
</evidence>
<evidence type="ECO:0000269" key="12">
    <source>
    </source>
</evidence>
<evidence type="ECO:0000269" key="13">
    <source>
    </source>
</evidence>
<evidence type="ECO:0000269" key="14">
    <source>
    </source>
</evidence>
<evidence type="ECO:0000269" key="15">
    <source>
    </source>
</evidence>
<evidence type="ECO:0000269" key="16">
    <source>
    </source>
</evidence>
<evidence type="ECO:0000269" key="17">
    <source>
    </source>
</evidence>
<evidence type="ECO:0000303" key="18">
    <source>
    </source>
</evidence>
<evidence type="ECO:0000303" key="19">
    <source>
    </source>
</evidence>
<evidence type="ECO:0000305" key="20"/>
<evidence type="ECO:0000312" key="21">
    <source>
        <dbReference type="EMBL" id="AAF01458.1"/>
    </source>
</evidence>
<evidence type="ECO:0000312" key="22">
    <source>
        <dbReference type="EMBL" id="AAF05701.1"/>
    </source>
</evidence>
<evidence type="ECO:0000312" key="23">
    <source>
        <dbReference type="EMBL" id="CCD61783.1"/>
    </source>
</evidence>
<evidence type="ECO:0000312" key="24">
    <source>
        <dbReference type="WormBase" id="B0348.4b"/>
    </source>
</evidence>
<gene>
    <name evidence="23 24" type="primary">egl-8</name>
    <name type="ORF">B0348.4</name>
</gene>
<comment type="function">
    <text evidence="1 9 10 11 12 13 14 15 16">Mediates the production of the second messenger molecules diacylglycerol (DAG) and inositol 1,4,5-trisphosphate (IP3) which plays an important role in the regulation of intracellular signaling cascades (By similarity). Required in the nervous system to modulate neuronal activity. Facilitates synaptic transmission at neuromuscular junctions by regulating the release of acetylcholine from the motor neurons and thus affecting locomotion (PubMed:10571228). Plays a role in efficient egg laying and defecation (PubMed:10571227, PubMed:10571228, PubMed:24212673). Involved in axon regeneration after injury (PubMed:23072806). Plays a role in male mating behavior by regulating spicule insertion and sperm transfer (PubMed:15958491). By triggering Ca(2+) transient via IP3-mediated activation of IPR3 receptor itr-1 in ASH sensory neurons, regulates avoidance behavior in response to nose touch (PubMed:19730689). By activating tpa-1 via DAG production, required for the expression of antimicrobial peptide nlp-29 in response to fungal infection (PubMed:19380113). During embryogenesis, may play a role in epidermal morphogenesis together with plc-1 (PubMed:18369461).</text>
</comment>
<comment type="catalytic activity">
    <reaction evidence="1">
        <text>a 1,2-diacyl-sn-glycero-3-phospho-(1D-myo-inositol-4,5-bisphosphate) + H2O = 1D-myo-inositol 1,4,5-trisphosphate + a 1,2-diacyl-sn-glycerol + H(+)</text>
        <dbReference type="Rhea" id="RHEA:33179"/>
        <dbReference type="ChEBI" id="CHEBI:15377"/>
        <dbReference type="ChEBI" id="CHEBI:15378"/>
        <dbReference type="ChEBI" id="CHEBI:17815"/>
        <dbReference type="ChEBI" id="CHEBI:58456"/>
        <dbReference type="ChEBI" id="CHEBI:203600"/>
        <dbReference type="EC" id="3.1.4.11"/>
    </reaction>
</comment>
<comment type="cofactor">
    <cofactor evidence="2">
        <name>Ca(2+)</name>
        <dbReference type="ChEBI" id="CHEBI:29108"/>
    </cofactor>
</comment>
<comment type="subcellular location">
    <subcellularLocation>
        <location evidence="9">Perikaryon</location>
    </subcellularLocation>
    <subcellularLocation>
        <location evidence="9">Cell projection</location>
        <location evidence="9">Axon</location>
    </subcellularLocation>
    <subcellularLocation>
        <location evidence="9">Synapse</location>
    </subcellularLocation>
    <subcellularLocation>
        <location evidence="9">Cell junction</location>
        <location evidence="9">Adherens junction</location>
    </subcellularLocation>
    <text evidence="9">Present in neuronal cell somas and axon processes of the nerve ring in head ganglia. Present in the adherens junction of intestinal cells.</text>
</comment>
<comment type="alternative products">
    <event type="alternative splicing"/>
    <isoform>
        <id>G5EBH0-1</id>
        <name evidence="9">b</name>
        <sequence type="displayed"/>
    </isoform>
    <isoform>
        <id>G5EBH0-2</id>
        <name evidence="10">a</name>
        <sequence type="described" ref="VSP_053885"/>
    </isoform>
    <isoform>
        <id>G5EBH0-3</id>
        <name evidence="17">c</name>
        <sequence type="described" ref="VSP_053882 VSP_053883 VSP_053884"/>
    </isoform>
</comment>
<comment type="tissue specificity">
    <text evidence="9 10 11">Expressed in most or all neurons with high expression in the head and tail ganglia and low expression in the motor neurons of the ventral cord. Expressed in the intestine (at protein level) (PubMed:10571227, PubMed:10571228). In males, expressed in vas deferens, spicule protractor muscles, diagonal muscles and a male-specific neuron (PubMed:15958491).</text>
</comment>
<comment type="disruption phenotype">
    <text evidence="9 10 11 12 13 14 16">Mutant worms are similar in size to the wild-type but animals are bloated with eggs due to defective egg laying with decreased body flexion and sluggish locomotion (PubMed:10571227, PubMed:10571228). They have defects in the posterior body contraction step of the defecation motor program and become sluggish in the presence of exogenous betaine (PubMed:24212673). Animals are resistant to aldicarb, a carbamate insecticide (PubMed:10571228). Simultaneous knockout of egl-8 and snf-3 results in uncoordinated, hypercontracted and paralyzed animals (PubMed:24212673). RNAi-mediated knockdown causes a defect in sperm transfer and a slight defect in spicule protrusion resulting in male infertility (PubMed:15958491). Ca(2+) transient increase and avoidance behavior are defective in response to nose touch but not to benzaldehyde (PubMed:19730689). nlp-29 expression is abrogated following fungal infection by D.coniospora but not following physical injury (PubMed:19380113). Causes a 1.6 fold increase in embryonic arrest in a plc-1 (tm753) mutant background (PubMed:18369461).</text>
</comment>
<sequence length="1431" mass="160904">MAKEFQFNWKPTIIPELLHGSVFDRYDDESTCLELNAQVRIDENGFFLRWLIEGKDAVVLDMGQIWEARTGGLPKDGRIMFELEQRGASETIAERTIWITHGQDLVNVQSFFLVAESVELAKTCRAGINDILKSSRIRHVCPTTQLMKYHTWLTMNVNERRKIPIKLIIKTFSSGKPEKMVQKCLNDLGLGGDKYTPARVINRSMGKKFRNFYKCSRGRKRKEREELDVDILTFEKFQRLYNKICPRTEVQELFVKLSGQKEYLTKERLINFLNEEQRDPRLNEILFPFFDSQRIVALLKKHENDIKYQEDGKMSGDGFLRFLMSDENPPVFLDRIEMFMDMDQPLCHYYINSSHNTYLTGRQYGGKSSSEIYRQVLLSGCRCIELDCWDGTGENKGEPIITHGKAMCTDVFFKDVLVQIRDTAFARSDFPVVLSFENHCSKSNQLKMAKYCMDIFGDMLLSKPFEDAPLDPGVSLPSPNRLRKKILIKNKRLKTDIERHQLDQFLREGKLDEEDELNETPEVVGEDSVSPRSGGSGGTGAPEEVDDDTSDDDDDPSVQTSLNVMRTIPTVNTTSNNGSNRSARSSLDTPSPSGGSLMVPDRATSTATSIKNAVLARSPNFSSLRQKLSFKRRQSPLAGDQRAHPEVEQPVSSSSPATPSISGPPPCATSSGSTSSITITTTGCSTSSSGPSKHILGGEMPAKENDEAHPELKQNFIAKNLKGFGFSKKQPVLTKEEEERIFAEYHYTGATTNIHPLLSSLVNYTHPVKFSGFDVAEANNLHFHMSSFSESTGLGYLKQSAPEFVNYNKRQSSRIYPKGARVDSSNFLPQIFWNAGCQMVSLNFQTPDVYMQLNMGKFEYNGGSGYLLKPDFLRRPDRTFDPFSESPVDGVIAAHCSVRVISGQFLSDRKIGTYVEVEMYGLPTDTIRKEHKTKVIPGNGLNPVYNEDPFVFRKVVLPELAVLRFAVYDENGKQLGQRILPLDGLQAGYRHISLRSDTNQSFILSPVLFVQIVIKTYVPDELSGLVDALADPRAFLSEQKKRQEALAHMGVDDSDIPDVPNTRNMALRHVKQPPRQNGSSADLLANNGQTGSARGDQTSSMASSTIRSPNEQPQPVAVDKFKVDPIEVDDLRRDKAFAKLLKRFQKELDDLRKKHQKQRDSIQKQQPARRRNSSIAWIQTNVDKLITNNRRSTKKEKGSRRSLTASVSSGCGSASGTVTVSVCSPSGASCSGYSTGGPSTPVACNSDGTGSPATIGSPVPQDLVNNDRVRSLVNTQTGEWSAMVRRHDEEEFELKKVQLKEQFDLLRKLMSEAQKNQMLALKLRLEAEGKDLKQTQTKKSMEDAKVIQLDKGIKTKAERDRRVKELNEKNLKMFVEERKRLAMKAQKHEEQLTKRHLDQLEQLDKDFHKALDAEVGNYKEEQLAAQPTSVV</sequence>
<dbReference type="EC" id="3.1.4.11" evidence="3"/>
<dbReference type="EMBL" id="AF179426">
    <property type="protein sequence ID" value="AAF05701.1"/>
    <property type="molecule type" value="mRNA"/>
</dbReference>
<dbReference type="EMBL" id="AF188477">
    <property type="protein sequence ID" value="AAF01458.1"/>
    <property type="molecule type" value="mRNA"/>
</dbReference>
<dbReference type="EMBL" id="FO080176">
    <property type="protein sequence ID" value="CCD61782.1"/>
    <property type="molecule type" value="Genomic_DNA"/>
</dbReference>
<dbReference type="EMBL" id="FO080176">
    <property type="protein sequence ID" value="CCD61783.1"/>
    <property type="molecule type" value="Genomic_DNA"/>
</dbReference>
<dbReference type="EMBL" id="FO080176">
    <property type="protein sequence ID" value="CCD61784.1"/>
    <property type="molecule type" value="Genomic_DNA"/>
</dbReference>
<dbReference type="PIR" id="T37264">
    <property type="entry name" value="T37264"/>
</dbReference>
<dbReference type="RefSeq" id="NP_001021346.1">
    <molecule id="G5EBH0-2"/>
    <property type="nucleotide sequence ID" value="NM_001026175.5"/>
</dbReference>
<dbReference type="RefSeq" id="NP_001021347.1">
    <molecule id="G5EBH0-1"/>
    <property type="nucleotide sequence ID" value="NM_001026176.3"/>
</dbReference>
<dbReference type="RefSeq" id="NP_001021348.1">
    <molecule id="G5EBH0-3"/>
    <property type="nucleotide sequence ID" value="NM_001026177.6"/>
</dbReference>
<dbReference type="SMR" id="G5EBH0"/>
<dbReference type="BioGRID" id="43612">
    <property type="interactions" value="3"/>
</dbReference>
<dbReference type="FunCoup" id="G5EBH0">
    <property type="interactions" value="1029"/>
</dbReference>
<dbReference type="STRING" id="6239.B0348.4d.1"/>
<dbReference type="PaxDb" id="6239-B0348.4b"/>
<dbReference type="PeptideAtlas" id="G5EBH0"/>
<dbReference type="EnsemblMetazoa" id="B0348.4a.1">
    <molecule id="G5EBH0-2"/>
    <property type="protein sequence ID" value="B0348.4a.1"/>
    <property type="gene ID" value="WBGene00001177"/>
</dbReference>
<dbReference type="EnsemblMetazoa" id="B0348.4b.1">
    <molecule id="G5EBH0-1"/>
    <property type="protein sequence ID" value="B0348.4b.1"/>
    <property type="gene ID" value="WBGene00001177"/>
</dbReference>
<dbReference type="EnsemblMetazoa" id="B0348.4c.1">
    <molecule id="G5EBH0-3"/>
    <property type="protein sequence ID" value="B0348.4c.1"/>
    <property type="gene ID" value="WBGene00001177"/>
</dbReference>
<dbReference type="GeneID" id="178537"/>
<dbReference type="KEGG" id="cel:CELE_B0348.4"/>
<dbReference type="UCSC" id="B0348.4a">
    <property type="organism name" value="c. elegans"/>
</dbReference>
<dbReference type="AGR" id="WB:WBGene00001177"/>
<dbReference type="CTD" id="178537"/>
<dbReference type="WormBase" id="B0348.4a">
    <molecule id="G5EBH0-2"/>
    <property type="protein sequence ID" value="CE30588"/>
    <property type="gene ID" value="WBGene00001177"/>
    <property type="gene designation" value="egl-8"/>
</dbReference>
<dbReference type="WormBase" id="B0348.4b">
    <molecule id="G5EBH0-1"/>
    <property type="protein sequence ID" value="CE30589"/>
    <property type="gene ID" value="WBGene00001177"/>
    <property type="gene designation" value="egl-8"/>
</dbReference>
<dbReference type="WormBase" id="B0348.4c">
    <molecule id="G5EBH0-3"/>
    <property type="protein sequence ID" value="CE36909"/>
    <property type="gene ID" value="WBGene00001177"/>
    <property type="gene designation" value="egl-8"/>
</dbReference>
<dbReference type="eggNOG" id="KOG1265">
    <property type="taxonomic scope" value="Eukaryota"/>
</dbReference>
<dbReference type="GeneTree" id="ENSGT00940000156426"/>
<dbReference type="HOGENOM" id="CLU_002738_2_0_1"/>
<dbReference type="InParanoid" id="G5EBH0"/>
<dbReference type="OrthoDB" id="269822at2759"/>
<dbReference type="PhylomeDB" id="G5EBH0"/>
<dbReference type="Reactome" id="R-CEL-112043">
    <property type="pathway name" value="PLC beta mediated events"/>
</dbReference>
<dbReference type="Reactome" id="R-CEL-1855204">
    <property type="pathway name" value="Synthesis of IP3 and IP4 in the cytosol"/>
</dbReference>
<dbReference type="Reactome" id="R-CEL-416476">
    <property type="pathway name" value="G alpha (q) signalling events"/>
</dbReference>
<dbReference type="PRO" id="PR:G5EBH0"/>
<dbReference type="Proteomes" id="UP000001940">
    <property type="component" value="Chromosome V"/>
</dbReference>
<dbReference type="Bgee" id="WBGene00001177">
    <property type="expression patterns" value="Expressed in larva and 3 other cell types or tissues"/>
</dbReference>
<dbReference type="ExpressionAtlas" id="G5EBH0">
    <property type="expression patterns" value="baseline and differential"/>
</dbReference>
<dbReference type="GO" id="GO:0005912">
    <property type="term" value="C:adherens junction"/>
    <property type="evidence" value="ECO:0007669"/>
    <property type="project" value="UniProtKB-SubCell"/>
</dbReference>
<dbReference type="GO" id="GO:0030424">
    <property type="term" value="C:axon"/>
    <property type="evidence" value="ECO:0007669"/>
    <property type="project" value="UniProtKB-SubCell"/>
</dbReference>
<dbReference type="GO" id="GO:0043204">
    <property type="term" value="C:perikaryon"/>
    <property type="evidence" value="ECO:0007669"/>
    <property type="project" value="UniProtKB-SubCell"/>
</dbReference>
<dbReference type="GO" id="GO:0005886">
    <property type="term" value="C:plasma membrane"/>
    <property type="evidence" value="ECO:0000314"/>
    <property type="project" value="WormBase"/>
</dbReference>
<dbReference type="GO" id="GO:0045202">
    <property type="term" value="C:synapse"/>
    <property type="evidence" value="ECO:0007669"/>
    <property type="project" value="UniProtKB-SubCell"/>
</dbReference>
<dbReference type="GO" id="GO:0005509">
    <property type="term" value="F:calcium ion binding"/>
    <property type="evidence" value="ECO:0007669"/>
    <property type="project" value="InterPro"/>
</dbReference>
<dbReference type="GO" id="GO:0004435">
    <property type="term" value="F:phosphatidylinositol-4,5-bisphosphate phospholipase C activity"/>
    <property type="evidence" value="ECO:0000318"/>
    <property type="project" value="GO_Central"/>
</dbReference>
<dbReference type="GO" id="GO:0006935">
    <property type="term" value="P:chemotaxis"/>
    <property type="evidence" value="ECO:0000316"/>
    <property type="project" value="WormBase"/>
</dbReference>
<dbReference type="GO" id="GO:0007212">
    <property type="term" value="P:G protein-coupled dopamine receptor signaling pathway"/>
    <property type="evidence" value="ECO:0000315"/>
    <property type="project" value="WormBase"/>
</dbReference>
<dbReference type="GO" id="GO:0016042">
    <property type="term" value="P:lipid catabolic process"/>
    <property type="evidence" value="ECO:0007669"/>
    <property type="project" value="UniProtKB-KW"/>
</dbReference>
<dbReference type="GO" id="GO:0046488">
    <property type="term" value="P:phosphatidylinositol metabolic process"/>
    <property type="evidence" value="ECO:0000318"/>
    <property type="project" value="GO_Central"/>
</dbReference>
<dbReference type="GO" id="GO:0048015">
    <property type="term" value="P:phosphatidylinositol-mediated signaling"/>
    <property type="evidence" value="ECO:0000318"/>
    <property type="project" value="GO_Central"/>
</dbReference>
<dbReference type="GO" id="GO:0014057">
    <property type="term" value="P:positive regulation of acetylcholine secretion, neurotransmission"/>
    <property type="evidence" value="ECO:0000315"/>
    <property type="project" value="WormBase"/>
</dbReference>
<dbReference type="GO" id="GO:0048680">
    <property type="term" value="P:positive regulation of axon regeneration"/>
    <property type="evidence" value="ECO:0000315"/>
    <property type="project" value="UniProtKB"/>
</dbReference>
<dbReference type="GO" id="GO:0040017">
    <property type="term" value="P:positive regulation of locomotion"/>
    <property type="evidence" value="ECO:0000315"/>
    <property type="project" value="WormBase"/>
</dbReference>
<dbReference type="GO" id="GO:0035418">
    <property type="term" value="P:protein localization to synapse"/>
    <property type="evidence" value="ECO:0000316"/>
    <property type="project" value="WormBase"/>
</dbReference>
<dbReference type="GO" id="GO:0046662">
    <property type="term" value="P:regulation of egg-laying behavior"/>
    <property type="evidence" value="ECO:0000315"/>
    <property type="project" value="WormBase"/>
</dbReference>
<dbReference type="GO" id="GO:0040012">
    <property type="term" value="P:regulation of locomotion"/>
    <property type="evidence" value="ECO:0000316"/>
    <property type="project" value="WormBase"/>
</dbReference>
<dbReference type="GO" id="GO:0043051">
    <property type="term" value="P:regulation of nematode pharyngeal pumping"/>
    <property type="evidence" value="ECO:0000315"/>
    <property type="project" value="WormBase"/>
</dbReference>
<dbReference type="GO" id="GO:0051209">
    <property type="term" value="P:release of sequestered calcium ion into cytosol"/>
    <property type="evidence" value="ECO:0000318"/>
    <property type="project" value="GO_Central"/>
</dbReference>
<dbReference type="GO" id="GO:0043052">
    <property type="term" value="P:thermotaxis"/>
    <property type="evidence" value="ECO:0000316"/>
    <property type="project" value="WormBase"/>
</dbReference>
<dbReference type="CDD" id="cd00275">
    <property type="entry name" value="C2_PLC_like"/>
    <property type="match status" value="1"/>
</dbReference>
<dbReference type="CDD" id="cd16200">
    <property type="entry name" value="EFh_PI-PLCbeta"/>
    <property type="match status" value="1"/>
</dbReference>
<dbReference type="CDD" id="cd13361">
    <property type="entry name" value="PH_PLC_beta"/>
    <property type="match status" value="1"/>
</dbReference>
<dbReference type="CDD" id="cd08591">
    <property type="entry name" value="PI-PLCc_beta"/>
    <property type="match status" value="1"/>
</dbReference>
<dbReference type="FunFam" id="1.10.238.10:FF:000024">
    <property type="entry name" value="1-phosphatidylinositol 4,5-bisphosphate phosphodiesterase"/>
    <property type="match status" value="1"/>
</dbReference>
<dbReference type="FunFam" id="1.20.1230.10:FF:000006">
    <property type="entry name" value="1-phosphatidylinositol 4,5-bisphosphate phosphodiesterase"/>
    <property type="match status" value="1"/>
</dbReference>
<dbReference type="FunFam" id="2.60.40.150:FF:000008">
    <property type="entry name" value="1-phosphatidylinositol 4,5-bisphosphate phosphodiesterase"/>
    <property type="match status" value="1"/>
</dbReference>
<dbReference type="FunFam" id="3.20.20.190:FF:000052">
    <property type="entry name" value="1-phosphatidylinositol 4,5-bisphosphate phosphodiesterase"/>
    <property type="match status" value="1"/>
</dbReference>
<dbReference type="FunFam" id="3.20.20.190:FF:000047">
    <property type="entry name" value="Phosphoinositide phospholipase C"/>
    <property type="match status" value="1"/>
</dbReference>
<dbReference type="Gene3D" id="2.30.29.240">
    <property type="match status" value="1"/>
</dbReference>
<dbReference type="Gene3D" id="2.60.40.150">
    <property type="entry name" value="C2 domain"/>
    <property type="match status" value="1"/>
</dbReference>
<dbReference type="Gene3D" id="1.10.238.10">
    <property type="entry name" value="EF-hand"/>
    <property type="match status" value="1"/>
</dbReference>
<dbReference type="Gene3D" id="3.20.20.190">
    <property type="entry name" value="Phosphatidylinositol (PI) phosphodiesterase"/>
    <property type="match status" value="2"/>
</dbReference>
<dbReference type="Gene3D" id="1.20.1230.10">
    <property type="entry name" value="Phospholipase C beta, distal C-terminal domain"/>
    <property type="match status" value="1"/>
</dbReference>
<dbReference type="InterPro" id="IPR000008">
    <property type="entry name" value="C2_dom"/>
</dbReference>
<dbReference type="InterPro" id="IPR035892">
    <property type="entry name" value="C2_domain_sf"/>
</dbReference>
<dbReference type="InterPro" id="IPR011992">
    <property type="entry name" value="EF-hand-dom_pair"/>
</dbReference>
<dbReference type="InterPro" id="IPR001192">
    <property type="entry name" value="PI-PLC_fam"/>
</dbReference>
<dbReference type="InterPro" id="IPR016280">
    <property type="entry name" value="PLC-beta"/>
</dbReference>
<dbReference type="InterPro" id="IPR042531">
    <property type="entry name" value="PLC-beta_C_sf"/>
</dbReference>
<dbReference type="InterPro" id="IPR037862">
    <property type="entry name" value="PLC-beta_PH"/>
</dbReference>
<dbReference type="InterPro" id="IPR017946">
    <property type="entry name" value="PLC-like_Pdiesterase_TIM-brl"/>
</dbReference>
<dbReference type="InterPro" id="IPR015359">
    <property type="entry name" value="PLC_EF-hand-like"/>
</dbReference>
<dbReference type="InterPro" id="IPR053945">
    <property type="entry name" value="PLCB1-4-like_EFh"/>
</dbReference>
<dbReference type="InterPro" id="IPR000909">
    <property type="entry name" value="PLipase_C_PInositol-sp_X_dom"/>
</dbReference>
<dbReference type="InterPro" id="IPR001711">
    <property type="entry name" value="PLipase_C_Pinositol-sp_Y"/>
</dbReference>
<dbReference type="PANTHER" id="PTHR10336:SF36">
    <property type="entry name" value="1-PHOSPHATIDYLINOSITOL 4,5-BISPHOSPHATE PHOSPHODIESTERASE BETA-4"/>
    <property type="match status" value="1"/>
</dbReference>
<dbReference type="PANTHER" id="PTHR10336">
    <property type="entry name" value="PHOSPHOINOSITIDE-SPECIFIC PHOSPHOLIPASE C FAMILY PROTEIN"/>
    <property type="match status" value="1"/>
</dbReference>
<dbReference type="Pfam" id="PF00168">
    <property type="entry name" value="C2"/>
    <property type="match status" value="1"/>
</dbReference>
<dbReference type="Pfam" id="PF09279">
    <property type="entry name" value="EF-hand_like"/>
    <property type="match status" value="1"/>
</dbReference>
<dbReference type="Pfam" id="PF17787">
    <property type="entry name" value="PH_14"/>
    <property type="match status" value="1"/>
</dbReference>
<dbReference type="Pfam" id="PF00388">
    <property type="entry name" value="PI-PLC-X"/>
    <property type="match status" value="1"/>
</dbReference>
<dbReference type="Pfam" id="PF00387">
    <property type="entry name" value="PI-PLC-Y"/>
    <property type="match status" value="1"/>
</dbReference>
<dbReference type="Pfam" id="PF22631">
    <property type="entry name" value="PLCB1-4-like_EFh"/>
    <property type="match status" value="1"/>
</dbReference>
<dbReference type="PIRSF" id="PIRSF000956">
    <property type="entry name" value="PLC-beta"/>
    <property type="match status" value="1"/>
</dbReference>
<dbReference type="PRINTS" id="PR00390">
    <property type="entry name" value="PHPHLIPASEC"/>
</dbReference>
<dbReference type="SMART" id="SM00239">
    <property type="entry name" value="C2"/>
    <property type="match status" value="1"/>
</dbReference>
<dbReference type="SMART" id="SM00148">
    <property type="entry name" value="PLCXc"/>
    <property type="match status" value="1"/>
</dbReference>
<dbReference type="SMART" id="SM00149">
    <property type="entry name" value="PLCYc"/>
    <property type="match status" value="1"/>
</dbReference>
<dbReference type="SUPFAM" id="SSF69989">
    <property type="entry name" value="C-terminal domain of PLC-beta"/>
    <property type="match status" value="1"/>
</dbReference>
<dbReference type="SUPFAM" id="SSF49562">
    <property type="entry name" value="C2 domain (Calcium/lipid-binding domain, CaLB)"/>
    <property type="match status" value="1"/>
</dbReference>
<dbReference type="SUPFAM" id="SSF47473">
    <property type="entry name" value="EF-hand"/>
    <property type="match status" value="1"/>
</dbReference>
<dbReference type="SUPFAM" id="SSF50729">
    <property type="entry name" value="PH domain-like"/>
    <property type="match status" value="1"/>
</dbReference>
<dbReference type="SUPFAM" id="SSF51695">
    <property type="entry name" value="PLC-like phosphodiesterases"/>
    <property type="match status" value="1"/>
</dbReference>
<dbReference type="PROSITE" id="PS50004">
    <property type="entry name" value="C2"/>
    <property type="match status" value="1"/>
</dbReference>
<dbReference type="PROSITE" id="PS50007">
    <property type="entry name" value="PIPLC_X_DOMAIN"/>
    <property type="match status" value="1"/>
</dbReference>
<dbReference type="PROSITE" id="PS50008">
    <property type="entry name" value="PIPLC_Y_DOMAIN"/>
    <property type="match status" value="1"/>
</dbReference>
<reference evidence="20 22" key="1">
    <citation type="journal article" date="1999" name="Neuron">
        <title>Goalpha and diacylglycerol kinase negatively regulate the Gqalpha pathway in C. elegans.</title>
        <authorList>
            <person name="Miller K.G."/>
            <person name="Emerson M.D."/>
            <person name="Rand J.B."/>
        </authorList>
    </citation>
    <scope>NUCLEOTIDE SEQUENCE [MRNA] (ISOFORM B)</scope>
    <scope>FUNCTION</scope>
    <scope>SUBCELLULAR LOCATION</scope>
    <scope>TISSUE SPECIFICITY</scope>
    <scope>ALTERNATIVE SPLICING</scope>
    <scope>DISRUPTION PHENOTYPE</scope>
    <source>
        <strain evidence="22">Bristol N2</strain>
    </source>
</reference>
<reference evidence="20 21" key="2">
    <citation type="journal article" date="1999" name="Neuron">
        <title>Facilitation of synaptic transmission by EGL-30 Gqalpha and EGL-8 PLCbeta: DAG binding to UNC-13 is required to stimulate acetylcholine release.</title>
        <authorList>
            <person name="Lackner M.R."/>
            <person name="Nurrish S.J."/>
            <person name="Kaplan J.M."/>
        </authorList>
    </citation>
    <scope>NUCLEOTIDE SEQUENCE [MRNA] (ISOFORM A)</scope>
    <scope>FUNCTION</scope>
    <scope>TISSUE SPECIFICITY</scope>
    <scope>DISRUPTION PHENOTYPE</scope>
    <scope>MUTAGENESIS OF GLY-45</scope>
    <source>
        <strain evidence="21">Bristol N2</strain>
    </source>
</reference>
<reference evidence="20 23" key="3">
    <citation type="journal article" date="1998" name="Science">
        <title>Genome sequence of the nematode C. elegans: a platform for investigating biology.</title>
        <authorList>
            <consortium name="The C. elegans sequencing consortium"/>
        </authorList>
    </citation>
    <scope>NUCLEOTIDE SEQUENCE [LARGE SCALE GENOMIC DNA]</scope>
    <scope>ALTERNATIVE SPLICING</scope>
    <source>
        <strain evidence="23">Bristol N2</strain>
    </source>
</reference>
<reference key="4">
    <citation type="journal article" date="2005" name="Mol. Biol. Cell">
        <title>Inositol 1,4,5-trisphosphate signaling regulates mating behavior in Caenorhabditis elegans males.</title>
        <authorList>
            <person name="Gower N.J."/>
            <person name="Walker D.S."/>
            <person name="Baylis H.A."/>
        </authorList>
    </citation>
    <scope>FUNCTION</scope>
    <scope>TISSUE SPECIFICITY</scope>
    <scope>DISRUPTION PHENOTYPE</scope>
</reference>
<reference key="5">
    <citation type="journal article" date="2008" name="PLoS Genet.">
        <title>Phospholipase C-epsilon regulates epidermal morphogenesis in Caenorhabditis elegans.</title>
        <authorList>
            <person name="Vazquez-Manrique R.P."/>
            <person name="Nagy A.I."/>
            <person name="Legg J.C."/>
            <person name="Bales O.A."/>
            <person name="Ly S."/>
            <person name="Baylis H.A."/>
        </authorList>
    </citation>
    <scope>FUNCTION</scope>
    <scope>DISRUPTION PHENOTYPE</scope>
</reference>
<reference key="6">
    <citation type="journal article" date="2009" name="Cell Host Microbe">
        <title>Antifungal innate immunity in C. elegans: PKCdelta links G protein signaling and a conserved p38 MAPK cascade.</title>
        <authorList>
            <person name="Ziegler K."/>
            <person name="Kurz C.L."/>
            <person name="Cypowyj S."/>
            <person name="Couillault C."/>
            <person name="Pophillat M."/>
            <person name="Pujol N."/>
            <person name="Ewbank J.J."/>
        </authorList>
    </citation>
    <scope>FUNCTION</scope>
    <scope>DISRUPTION PHENOTYPE</scope>
</reference>
<reference key="7">
    <citation type="journal article" date="2009" name="PLoS Genet.">
        <title>Inositol 1,4,5-trisphosphate signalling regulates the avoidance response to nose touch in Caenorhabditis elegans.</title>
        <authorList>
            <person name="Walker D.S."/>
            <person name="Vazquez-Manrique R.P."/>
            <person name="Gower N.J."/>
            <person name="Gregory E."/>
            <person name="Schafer W.R."/>
            <person name="Baylis H.A."/>
        </authorList>
    </citation>
    <scope>FUNCTION</scope>
    <scope>DISRUPTION PHENOTYPE</scope>
</reference>
<reference key="8">
    <citation type="journal article" date="2012" name="Nat. Commun.">
        <title>Endocannabinoid-Goalpha signalling inhibits axon regeneration in Caenorhabditis elegans by antagonizing Gqalpha-PKC-JNK signalling.</title>
        <authorList>
            <person name="Pastuhov S.I."/>
            <person name="Fujiki K."/>
            <person name="Nix P."/>
            <person name="Kanao S."/>
            <person name="Bastiani M."/>
            <person name="Matsumoto K."/>
            <person name="Hisamoto N."/>
        </authorList>
    </citation>
    <scope>FUNCTION</scope>
</reference>
<reference key="9">
    <citation type="journal article" date="2013" name="Nat. Neurosci.">
        <title>Betaine acts on a ligand-gated ion channel in the nervous system of the nematode C. elegans.</title>
        <authorList>
            <person name="Peden A.S."/>
            <person name="Mac P."/>
            <person name="Fei Y.J."/>
            <person name="Castro C."/>
            <person name="Jiang G."/>
            <person name="Murfitt K.J."/>
            <person name="Miska E.A."/>
            <person name="Griffin J.L."/>
            <person name="Ganapathy V."/>
            <person name="Jorgensen E.M."/>
        </authorList>
    </citation>
    <scope>FUNCTION</scope>
    <scope>DISRUPTION PHENOTYPE</scope>
    <source>
        <strain evidence="16">Bristol N2</strain>
    </source>
</reference>